<sequence length="123" mass="13484">MPTINQLIRKGRKKVKKKKTAPALQGSPQKRGVCTRVYTATPKKPNSALRKVARVRLTNGIEVTAYIPGIGHNLQEHSVVLVRGGRVKDLPGVRYHIVRGALDAAGVEGRKQGRSKYGVKKPK</sequence>
<comment type="function">
    <text evidence="2">With S4 and S5 plays an important role in translational accuracy.</text>
</comment>
<comment type="function">
    <text evidence="2">Interacts with and stabilizes bases of the 16S rRNA that are involved in tRNA selection in the A site and with the mRNA backbone. Located at the interface of the 30S and 50S subunits, it traverses the body of the 30S subunit contacting proteins on the other side and probably holding the rRNA structure together. The combined cluster of proteins S8, S12 and S17 appears to hold together the shoulder and platform of the 30S subunit.</text>
</comment>
<comment type="subunit">
    <text evidence="2">Part of the 30S ribosomal subunit. Contacts proteins S8 and S17. May interact with IF1 in the 30S initiation complex.</text>
</comment>
<comment type="similarity">
    <text evidence="2">Belongs to the universal ribosomal protein uS12 family.</text>
</comment>
<accession>B8D0B9</accession>
<proteinExistence type="inferred from homology"/>
<keyword id="KW-0488">Methylation</keyword>
<keyword id="KW-1185">Reference proteome</keyword>
<keyword id="KW-0687">Ribonucleoprotein</keyword>
<keyword id="KW-0689">Ribosomal protein</keyword>
<keyword id="KW-0694">RNA-binding</keyword>
<keyword id="KW-0699">rRNA-binding</keyword>
<keyword id="KW-0820">tRNA-binding</keyword>
<feature type="chain" id="PRO_1000134638" description="Small ribosomal subunit protein uS12">
    <location>
        <begin position="1"/>
        <end position="123"/>
    </location>
</feature>
<feature type="region of interest" description="Disordered" evidence="3">
    <location>
        <begin position="10"/>
        <end position="32"/>
    </location>
</feature>
<feature type="compositionally biased region" description="Basic residues" evidence="3">
    <location>
        <begin position="10"/>
        <end position="20"/>
    </location>
</feature>
<feature type="modified residue" description="3-methylthioaspartic acid" evidence="1">
    <location>
        <position position="89"/>
    </location>
</feature>
<protein>
    <recommendedName>
        <fullName evidence="2">Small ribosomal subunit protein uS12</fullName>
    </recommendedName>
    <alternativeName>
        <fullName evidence="4">30S ribosomal protein S12</fullName>
    </alternativeName>
</protein>
<gene>
    <name evidence="2" type="primary">rpsL</name>
    <name type="ordered locus">Hore_01120</name>
</gene>
<name>RS12_HALOH</name>
<evidence type="ECO:0000250" key="1"/>
<evidence type="ECO:0000255" key="2">
    <source>
        <dbReference type="HAMAP-Rule" id="MF_00403"/>
    </source>
</evidence>
<evidence type="ECO:0000256" key="3">
    <source>
        <dbReference type="SAM" id="MobiDB-lite"/>
    </source>
</evidence>
<evidence type="ECO:0000305" key="4"/>
<reference key="1">
    <citation type="journal article" date="2009" name="PLoS ONE">
        <title>Genome analysis of the anaerobic thermohalophilic bacterium Halothermothrix orenii.</title>
        <authorList>
            <person name="Mavromatis K."/>
            <person name="Ivanova N."/>
            <person name="Anderson I."/>
            <person name="Lykidis A."/>
            <person name="Hooper S.D."/>
            <person name="Sun H."/>
            <person name="Kunin V."/>
            <person name="Lapidus A."/>
            <person name="Hugenholtz P."/>
            <person name="Patel B."/>
            <person name="Kyrpides N.C."/>
        </authorList>
    </citation>
    <scope>NUCLEOTIDE SEQUENCE [LARGE SCALE GENOMIC DNA]</scope>
    <source>
        <strain>H 168 / OCM 544 / DSM 9562</strain>
    </source>
</reference>
<organism>
    <name type="scientific">Halothermothrix orenii (strain H 168 / OCM 544 / DSM 9562)</name>
    <dbReference type="NCBI Taxonomy" id="373903"/>
    <lineage>
        <taxon>Bacteria</taxon>
        <taxon>Bacillati</taxon>
        <taxon>Bacillota</taxon>
        <taxon>Clostridia</taxon>
        <taxon>Halanaerobiales</taxon>
        <taxon>Halothermotrichaceae</taxon>
        <taxon>Halothermothrix</taxon>
    </lineage>
</organism>
<dbReference type="EMBL" id="CP001098">
    <property type="protein sequence ID" value="ACL68873.1"/>
    <property type="molecule type" value="Genomic_DNA"/>
</dbReference>
<dbReference type="RefSeq" id="WP_012635072.1">
    <property type="nucleotide sequence ID" value="NC_011899.1"/>
</dbReference>
<dbReference type="SMR" id="B8D0B9"/>
<dbReference type="STRING" id="373903.Hore_01120"/>
<dbReference type="KEGG" id="hor:Hore_01120"/>
<dbReference type="eggNOG" id="COG0048">
    <property type="taxonomic scope" value="Bacteria"/>
</dbReference>
<dbReference type="HOGENOM" id="CLU_104295_1_2_9"/>
<dbReference type="OrthoDB" id="9802366at2"/>
<dbReference type="Proteomes" id="UP000000719">
    <property type="component" value="Chromosome"/>
</dbReference>
<dbReference type="GO" id="GO:0015935">
    <property type="term" value="C:small ribosomal subunit"/>
    <property type="evidence" value="ECO:0007669"/>
    <property type="project" value="InterPro"/>
</dbReference>
<dbReference type="GO" id="GO:0019843">
    <property type="term" value="F:rRNA binding"/>
    <property type="evidence" value="ECO:0007669"/>
    <property type="project" value="UniProtKB-UniRule"/>
</dbReference>
<dbReference type="GO" id="GO:0003735">
    <property type="term" value="F:structural constituent of ribosome"/>
    <property type="evidence" value="ECO:0007669"/>
    <property type="project" value="InterPro"/>
</dbReference>
<dbReference type="GO" id="GO:0000049">
    <property type="term" value="F:tRNA binding"/>
    <property type="evidence" value="ECO:0007669"/>
    <property type="project" value="UniProtKB-UniRule"/>
</dbReference>
<dbReference type="GO" id="GO:0006412">
    <property type="term" value="P:translation"/>
    <property type="evidence" value="ECO:0007669"/>
    <property type="project" value="UniProtKB-UniRule"/>
</dbReference>
<dbReference type="CDD" id="cd03368">
    <property type="entry name" value="Ribosomal_S12"/>
    <property type="match status" value="1"/>
</dbReference>
<dbReference type="FunFam" id="2.40.50.140:FF:000001">
    <property type="entry name" value="30S ribosomal protein S12"/>
    <property type="match status" value="1"/>
</dbReference>
<dbReference type="Gene3D" id="2.40.50.140">
    <property type="entry name" value="Nucleic acid-binding proteins"/>
    <property type="match status" value="1"/>
</dbReference>
<dbReference type="HAMAP" id="MF_00403_B">
    <property type="entry name" value="Ribosomal_uS12_B"/>
    <property type="match status" value="1"/>
</dbReference>
<dbReference type="InterPro" id="IPR012340">
    <property type="entry name" value="NA-bd_OB-fold"/>
</dbReference>
<dbReference type="InterPro" id="IPR006032">
    <property type="entry name" value="Ribosomal_uS12"/>
</dbReference>
<dbReference type="InterPro" id="IPR005679">
    <property type="entry name" value="Ribosomal_uS12_bac"/>
</dbReference>
<dbReference type="NCBIfam" id="TIGR00981">
    <property type="entry name" value="rpsL_bact"/>
    <property type="match status" value="1"/>
</dbReference>
<dbReference type="PANTHER" id="PTHR11652">
    <property type="entry name" value="30S RIBOSOMAL PROTEIN S12 FAMILY MEMBER"/>
    <property type="match status" value="1"/>
</dbReference>
<dbReference type="Pfam" id="PF00164">
    <property type="entry name" value="Ribosom_S12_S23"/>
    <property type="match status" value="1"/>
</dbReference>
<dbReference type="PIRSF" id="PIRSF002133">
    <property type="entry name" value="Ribosomal_S12/S23"/>
    <property type="match status" value="1"/>
</dbReference>
<dbReference type="PRINTS" id="PR01034">
    <property type="entry name" value="RIBOSOMALS12"/>
</dbReference>
<dbReference type="SUPFAM" id="SSF50249">
    <property type="entry name" value="Nucleic acid-binding proteins"/>
    <property type="match status" value="1"/>
</dbReference>
<dbReference type="PROSITE" id="PS00055">
    <property type="entry name" value="RIBOSOMAL_S12"/>
    <property type="match status" value="1"/>
</dbReference>